<sequence>MKPRFDIIRASRWFFLLSGAITVAGVIVFALFGFNLSTDFKSGSEVQFELNQRVPEARVRQMFASIGLPLGDTSLTVGGIQQNVVMVTLPEQLTAKQISEIQAAEHRFFPDAKQDIQVNSVDPFVAEQTARKAVYAVLAAAACIVVYIAIRFEFRFAISGIIALLHDAFIVLAAFALLRREVDLTFVAALLTIVGYSINDTIVIFDRIRENLKIDKPETVDELRAVVNKSLWQVMNRSIRTVLTVLIAAVILYFFGGISIRNFTFALIIGLVSGAYSSIFIASPIWVAWRSRSMKKATRGDKAAPIPE</sequence>
<feature type="chain" id="PRO_5000520991" description="Protein translocase subunit SecF">
    <location>
        <begin position="1"/>
        <end position="308"/>
    </location>
</feature>
<feature type="transmembrane region" description="Helical" evidence="1">
    <location>
        <begin position="14"/>
        <end position="34"/>
    </location>
</feature>
<feature type="transmembrane region" description="Helical" evidence="1">
    <location>
        <begin position="134"/>
        <end position="154"/>
    </location>
</feature>
<feature type="transmembrane region" description="Helical" evidence="1">
    <location>
        <begin position="158"/>
        <end position="178"/>
    </location>
</feature>
<feature type="transmembrane region" description="Helical" evidence="1">
    <location>
        <begin position="185"/>
        <end position="205"/>
    </location>
</feature>
<feature type="transmembrane region" description="Helical" evidence="1">
    <location>
        <begin position="238"/>
        <end position="258"/>
    </location>
</feature>
<feature type="transmembrane region" description="Helical" evidence="1">
    <location>
        <begin position="267"/>
        <end position="287"/>
    </location>
</feature>
<organism>
    <name type="scientific">Alicyclobacillus acidocaldarius subsp. acidocaldarius (strain ATCC 27009 / DSM 446 / BCRC 14685 / JCM 5260 / KCTC 1825 / NBRC 15652 / NCIMB 11725 / NRRL B-14509 / 104-IA)</name>
    <name type="common">Bacillus acidocaldarius</name>
    <dbReference type="NCBI Taxonomy" id="521098"/>
    <lineage>
        <taxon>Bacteria</taxon>
        <taxon>Bacillati</taxon>
        <taxon>Bacillota</taxon>
        <taxon>Bacilli</taxon>
        <taxon>Bacillales</taxon>
        <taxon>Alicyclobacillaceae</taxon>
        <taxon>Alicyclobacillus</taxon>
    </lineage>
</organism>
<gene>
    <name evidence="1" type="primary">secF</name>
    <name type="ordered locus">Aaci_2101</name>
</gene>
<evidence type="ECO:0000255" key="1">
    <source>
        <dbReference type="HAMAP-Rule" id="MF_01464"/>
    </source>
</evidence>
<keyword id="KW-1003">Cell membrane</keyword>
<keyword id="KW-0472">Membrane</keyword>
<keyword id="KW-0653">Protein transport</keyword>
<keyword id="KW-1185">Reference proteome</keyword>
<keyword id="KW-0811">Translocation</keyword>
<keyword id="KW-0812">Transmembrane</keyword>
<keyword id="KW-1133">Transmembrane helix</keyword>
<keyword id="KW-0813">Transport</keyword>
<proteinExistence type="inferred from homology"/>
<dbReference type="EMBL" id="CP001727">
    <property type="protein sequence ID" value="ACV59111.1"/>
    <property type="molecule type" value="Genomic_DNA"/>
</dbReference>
<dbReference type="RefSeq" id="WP_012811376.1">
    <property type="nucleotide sequence ID" value="NC_013205.1"/>
</dbReference>
<dbReference type="SMR" id="C8WQG6"/>
<dbReference type="STRING" id="521098.Aaci_2101"/>
<dbReference type="KEGG" id="aac:Aaci_2101"/>
<dbReference type="eggNOG" id="COG0341">
    <property type="taxonomic scope" value="Bacteria"/>
</dbReference>
<dbReference type="HOGENOM" id="CLU_050012_0_0_9"/>
<dbReference type="Proteomes" id="UP000001917">
    <property type="component" value="Chromosome"/>
</dbReference>
<dbReference type="GO" id="GO:0005886">
    <property type="term" value="C:plasma membrane"/>
    <property type="evidence" value="ECO:0007669"/>
    <property type="project" value="UniProtKB-SubCell"/>
</dbReference>
<dbReference type="GO" id="GO:0015450">
    <property type="term" value="F:protein-transporting ATPase activity"/>
    <property type="evidence" value="ECO:0007669"/>
    <property type="project" value="InterPro"/>
</dbReference>
<dbReference type="GO" id="GO:0065002">
    <property type="term" value="P:intracellular protein transmembrane transport"/>
    <property type="evidence" value="ECO:0007669"/>
    <property type="project" value="UniProtKB-UniRule"/>
</dbReference>
<dbReference type="GO" id="GO:0006605">
    <property type="term" value="P:protein targeting"/>
    <property type="evidence" value="ECO:0007669"/>
    <property type="project" value="UniProtKB-UniRule"/>
</dbReference>
<dbReference type="GO" id="GO:0043952">
    <property type="term" value="P:protein transport by the Sec complex"/>
    <property type="evidence" value="ECO:0007669"/>
    <property type="project" value="UniProtKB-UniRule"/>
</dbReference>
<dbReference type="FunFam" id="1.20.1640.10:FF:000024">
    <property type="entry name" value="Multifunctional fusion protein"/>
    <property type="match status" value="1"/>
</dbReference>
<dbReference type="Gene3D" id="1.20.1640.10">
    <property type="entry name" value="Multidrug efflux transporter AcrB transmembrane domain"/>
    <property type="match status" value="1"/>
</dbReference>
<dbReference type="HAMAP" id="MF_01464_B">
    <property type="entry name" value="SecF_B"/>
    <property type="match status" value="1"/>
</dbReference>
<dbReference type="InterPro" id="IPR022813">
    <property type="entry name" value="SecD/SecF_arch_bac"/>
</dbReference>
<dbReference type="InterPro" id="IPR022645">
    <property type="entry name" value="SecD/SecF_bac"/>
</dbReference>
<dbReference type="InterPro" id="IPR048634">
    <property type="entry name" value="SecD_SecF_C"/>
</dbReference>
<dbReference type="InterPro" id="IPR055344">
    <property type="entry name" value="SecD_SecF_C_bact"/>
</dbReference>
<dbReference type="InterPro" id="IPR005665">
    <property type="entry name" value="SecF_bac"/>
</dbReference>
<dbReference type="NCBIfam" id="TIGR00916">
    <property type="entry name" value="2A0604s01"/>
    <property type="match status" value="1"/>
</dbReference>
<dbReference type="NCBIfam" id="TIGR00966">
    <property type="entry name" value="transloc_SecF"/>
    <property type="match status" value="1"/>
</dbReference>
<dbReference type="PANTHER" id="PTHR30081:SF8">
    <property type="entry name" value="PROTEIN TRANSLOCASE SUBUNIT SECF"/>
    <property type="match status" value="1"/>
</dbReference>
<dbReference type="PANTHER" id="PTHR30081">
    <property type="entry name" value="PROTEIN-EXPORT MEMBRANE PROTEIN SEC"/>
    <property type="match status" value="1"/>
</dbReference>
<dbReference type="Pfam" id="PF02355">
    <property type="entry name" value="SecD_SecF_C"/>
    <property type="match status" value="1"/>
</dbReference>
<dbReference type="PRINTS" id="PR01755">
    <property type="entry name" value="SECFTRNLCASE"/>
</dbReference>
<dbReference type="SUPFAM" id="SSF82866">
    <property type="entry name" value="Multidrug efflux transporter AcrB transmembrane domain"/>
    <property type="match status" value="1"/>
</dbReference>
<protein>
    <recommendedName>
        <fullName>Protein translocase subunit SecF</fullName>
    </recommendedName>
</protein>
<comment type="function">
    <text evidence="1">Part of the Sec protein translocase complex. Interacts with the SecYEG preprotein conducting channel. SecDF uses the proton motive force (PMF) to complete protein translocation after the ATP-dependent function of SecA.</text>
</comment>
<comment type="subunit">
    <text evidence="1">Forms a complex with SecD. Part of the essential Sec protein translocation apparatus which comprises SecA, SecYEG and auxiliary proteins SecDF. Other proteins may also be involved.</text>
</comment>
<comment type="subcellular location">
    <subcellularLocation>
        <location evidence="1">Cell membrane</location>
        <topology evidence="1">Multi-pass membrane protein</topology>
    </subcellularLocation>
</comment>
<comment type="similarity">
    <text evidence="1">Belongs to the SecD/SecF family. SecF subfamily.</text>
</comment>
<accession>C8WQG6</accession>
<reference key="1">
    <citation type="submission" date="2009-09" db="EMBL/GenBank/DDBJ databases">
        <title>The complete chromosome of Alicyclobacillus acidocaldarius subsp. acidocaldarius DSM 446.</title>
        <authorList>
            <consortium name="US DOE Joint Genome Institute (JGI-PGF)"/>
            <person name="Lucas S."/>
            <person name="Copeland A."/>
            <person name="Lapidus A."/>
            <person name="Glavina del Rio T."/>
            <person name="Dalin E."/>
            <person name="Tice H."/>
            <person name="Bruce D."/>
            <person name="Goodwin L."/>
            <person name="Pitluck S."/>
            <person name="Kyrpides N."/>
            <person name="Mavromatis K."/>
            <person name="Ivanova N."/>
            <person name="Ovchinnikova G."/>
            <person name="Chertkov O."/>
            <person name="Sims D."/>
            <person name="Brettin T."/>
            <person name="Detter J.C."/>
            <person name="Han C."/>
            <person name="Larimer F."/>
            <person name="Land M."/>
            <person name="Hauser L."/>
            <person name="Markowitz V."/>
            <person name="Cheng J.-F."/>
            <person name="Hugenholtz P."/>
            <person name="Woyke T."/>
            <person name="Wu D."/>
            <person name="Pukall R."/>
            <person name="Klenk H.-P."/>
            <person name="Eisen J.A."/>
        </authorList>
    </citation>
    <scope>NUCLEOTIDE SEQUENCE [LARGE SCALE GENOMIC DNA]</scope>
    <source>
        <strain>ATCC 27009 / DSM 446 / BCRC 14685 / JCM 5260 / KCTC 1825 / NBRC 15652 / NCIMB 11725 / NRRL B-14509 / 104-IA</strain>
    </source>
</reference>
<name>SECF_ALIAD</name>